<proteinExistence type="inferred from homology"/>
<reference key="1">
    <citation type="journal article" date="2001" name="Gene">
        <title>Identification of transcriptionally expressed pheromone receptor genes in filamentous fungi.</title>
        <authorList>
            <person name="Poeggeler S."/>
            <person name="Kueck U."/>
        </authorList>
    </citation>
    <scope>NUCLEOTIDE SEQUENCE [GENOMIC DNA]</scope>
    <source>
        <tissue>Mycelium</tissue>
    </source>
</reference>
<reference key="2">
    <citation type="submission" date="2004-12" db="EMBL/GenBank/DDBJ databases">
        <authorList>
            <person name="Poeggeler S."/>
        </authorList>
    </citation>
    <scope>SEQUENCE REVISION TO 42</scope>
</reference>
<protein>
    <recommendedName>
        <fullName>Glyceraldehyde-3-phosphate dehydrogenase</fullName>
        <shortName>GAPDH</shortName>
        <ecNumber>1.2.1.12</ecNumber>
    </recommendedName>
</protein>
<gene>
    <name type="primary">GPD</name>
</gene>
<comment type="catalytic activity">
    <reaction evidence="2">
        <text>D-glyceraldehyde 3-phosphate + phosphate + NAD(+) = (2R)-3-phospho-glyceroyl phosphate + NADH + H(+)</text>
        <dbReference type="Rhea" id="RHEA:10300"/>
        <dbReference type="ChEBI" id="CHEBI:15378"/>
        <dbReference type="ChEBI" id="CHEBI:43474"/>
        <dbReference type="ChEBI" id="CHEBI:57540"/>
        <dbReference type="ChEBI" id="CHEBI:57604"/>
        <dbReference type="ChEBI" id="CHEBI:57945"/>
        <dbReference type="ChEBI" id="CHEBI:59776"/>
        <dbReference type="EC" id="1.2.1.12"/>
    </reaction>
</comment>
<comment type="pathway">
    <text>Carbohydrate degradation; glycolysis; pyruvate from D-glyceraldehyde 3-phosphate: step 1/5.</text>
</comment>
<comment type="subunit">
    <text evidence="1">Homotetramer.</text>
</comment>
<comment type="subcellular location">
    <subcellularLocation>
        <location evidence="1">Cytoplasm</location>
    </subcellularLocation>
</comment>
<comment type="similarity">
    <text evidence="3">Belongs to the glyceraldehyde-3-phosphate dehydrogenase family.</text>
</comment>
<dbReference type="EC" id="1.2.1.12"/>
<dbReference type="EMBL" id="AJ313527">
    <property type="protein sequence ID" value="CAC86412.2"/>
    <property type="molecule type" value="Genomic_DNA"/>
</dbReference>
<dbReference type="RefSeq" id="XP_003345550.1">
    <property type="nucleotide sequence ID" value="XM_003345502.1"/>
</dbReference>
<dbReference type="SMR" id="Q8WZN0"/>
<dbReference type="KEGG" id="smp:10802898"/>
<dbReference type="VEuPathDB" id="FungiDB:SMAC_06203"/>
<dbReference type="OMA" id="YGYTCNM"/>
<dbReference type="UniPathway" id="UPA00109">
    <property type="reaction ID" value="UER00184"/>
</dbReference>
<dbReference type="GO" id="GO:0005829">
    <property type="term" value="C:cytosol"/>
    <property type="evidence" value="ECO:0007669"/>
    <property type="project" value="TreeGrafter"/>
</dbReference>
<dbReference type="GO" id="GO:0004365">
    <property type="term" value="F:glyceraldehyde-3-phosphate dehydrogenase (NAD+) (phosphorylating) activity"/>
    <property type="evidence" value="ECO:0007669"/>
    <property type="project" value="UniProtKB-EC"/>
</dbReference>
<dbReference type="GO" id="GO:0051287">
    <property type="term" value="F:NAD binding"/>
    <property type="evidence" value="ECO:0007669"/>
    <property type="project" value="InterPro"/>
</dbReference>
<dbReference type="GO" id="GO:0050661">
    <property type="term" value="F:NADP binding"/>
    <property type="evidence" value="ECO:0007669"/>
    <property type="project" value="InterPro"/>
</dbReference>
<dbReference type="GO" id="GO:0006006">
    <property type="term" value="P:glucose metabolic process"/>
    <property type="evidence" value="ECO:0007669"/>
    <property type="project" value="InterPro"/>
</dbReference>
<dbReference type="GO" id="GO:0006096">
    <property type="term" value="P:glycolytic process"/>
    <property type="evidence" value="ECO:0007669"/>
    <property type="project" value="UniProtKB-UniPathway"/>
</dbReference>
<dbReference type="CDD" id="cd18126">
    <property type="entry name" value="GAPDH_I_C"/>
    <property type="match status" value="1"/>
</dbReference>
<dbReference type="CDD" id="cd05214">
    <property type="entry name" value="GAPDH_I_N"/>
    <property type="match status" value="1"/>
</dbReference>
<dbReference type="FunFam" id="3.30.360.10:FF:000001">
    <property type="entry name" value="Glyceraldehyde-3-phosphate dehydrogenase"/>
    <property type="match status" value="1"/>
</dbReference>
<dbReference type="FunFam" id="3.40.50.720:FF:000020">
    <property type="entry name" value="Glyceraldehyde-3-phosphate dehydrogenase"/>
    <property type="match status" value="1"/>
</dbReference>
<dbReference type="Gene3D" id="3.30.360.10">
    <property type="entry name" value="Dihydrodipicolinate Reductase, domain 2"/>
    <property type="match status" value="1"/>
</dbReference>
<dbReference type="Gene3D" id="3.40.50.720">
    <property type="entry name" value="NAD(P)-binding Rossmann-like Domain"/>
    <property type="match status" value="1"/>
</dbReference>
<dbReference type="InterPro" id="IPR020831">
    <property type="entry name" value="GlycerAld/Erythrose_P_DH"/>
</dbReference>
<dbReference type="InterPro" id="IPR020830">
    <property type="entry name" value="GlycerAld_3-P_DH_AS"/>
</dbReference>
<dbReference type="InterPro" id="IPR020829">
    <property type="entry name" value="GlycerAld_3-P_DH_cat"/>
</dbReference>
<dbReference type="InterPro" id="IPR020828">
    <property type="entry name" value="GlycerAld_3-P_DH_NAD(P)-bd"/>
</dbReference>
<dbReference type="InterPro" id="IPR006424">
    <property type="entry name" value="Glyceraldehyde-3-P_DH_1"/>
</dbReference>
<dbReference type="InterPro" id="IPR036291">
    <property type="entry name" value="NAD(P)-bd_dom_sf"/>
</dbReference>
<dbReference type="NCBIfam" id="TIGR01534">
    <property type="entry name" value="GAPDH-I"/>
    <property type="match status" value="1"/>
</dbReference>
<dbReference type="PANTHER" id="PTHR10836">
    <property type="entry name" value="GLYCERALDEHYDE 3-PHOSPHATE DEHYDROGENASE"/>
    <property type="match status" value="1"/>
</dbReference>
<dbReference type="PANTHER" id="PTHR10836:SF76">
    <property type="entry name" value="GLYCERALDEHYDE-3-PHOSPHATE DEHYDROGENASE-RELATED"/>
    <property type="match status" value="1"/>
</dbReference>
<dbReference type="Pfam" id="PF02800">
    <property type="entry name" value="Gp_dh_C"/>
    <property type="match status" value="1"/>
</dbReference>
<dbReference type="Pfam" id="PF00044">
    <property type="entry name" value="Gp_dh_N"/>
    <property type="match status" value="1"/>
</dbReference>
<dbReference type="PIRSF" id="PIRSF000149">
    <property type="entry name" value="GAP_DH"/>
    <property type="match status" value="1"/>
</dbReference>
<dbReference type="PRINTS" id="PR00078">
    <property type="entry name" value="G3PDHDRGNASE"/>
</dbReference>
<dbReference type="SMART" id="SM00846">
    <property type="entry name" value="Gp_dh_N"/>
    <property type="match status" value="1"/>
</dbReference>
<dbReference type="SUPFAM" id="SSF55347">
    <property type="entry name" value="Glyceraldehyde-3-phosphate dehydrogenase-like, C-terminal domain"/>
    <property type="match status" value="1"/>
</dbReference>
<dbReference type="SUPFAM" id="SSF51735">
    <property type="entry name" value="NAD(P)-binding Rossmann-fold domains"/>
    <property type="match status" value="1"/>
</dbReference>
<dbReference type="PROSITE" id="PS00071">
    <property type="entry name" value="GAPDH"/>
    <property type="match status" value="1"/>
</dbReference>
<feature type="chain" id="PRO_0000145583" description="Glyceraldehyde-3-phosphate dehydrogenase">
    <location>
        <begin position="1"/>
        <end position="338"/>
    </location>
</feature>
<feature type="active site" description="Nucleophile" evidence="2">
    <location>
        <position position="151"/>
    </location>
</feature>
<feature type="binding site" evidence="1">
    <location>
        <begin position="12"/>
        <end position="13"/>
    </location>
    <ligand>
        <name>NAD(+)</name>
        <dbReference type="ChEBI" id="CHEBI:57540"/>
    </ligand>
</feature>
<feature type="binding site" evidence="1">
    <location>
        <position position="34"/>
    </location>
    <ligand>
        <name>NAD(+)</name>
        <dbReference type="ChEBI" id="CHEBI:57540"/>
    </ligand>
</feature>
<feature type="binding site" evidence="1">
    <location>
        <position position="79"/>
    </location>
    <ligand>
        <name>NAD(+)</name>
        <dbReference type="ChEBI" id="CHEBI:57540"/>
    </ligand>
</feature>
<feature type="binding site" evidence="1">
    <location>
        <begin position="150"/>
        <end position="152"/>
    </location>
    <ligand>
        <name>D-glyceraldehyde 3-phosphate</name>
        <dbReference type="ChEBI" id="CHEBI:59776"/>
    </ligand>
</feature>
<feature type="binding site" evidence="1">
    <location>
        <position position="181"/>
    </location>
    <ligand>
        <name>D-glyceraldehyde 3-phosphate</name>
        <dbReference type="ChEBI" id="CHEBI:59776"/>
    </ligand>
</feature>
<feature type="binding site" evidence="1">
    <location>
        <begin position="210"/>
        <end position="211"/>
    </location>
    <ligand>
        <name>D-glyceraldehyde 3-phosphate</name>
        <dbReference type="ChEBI" id="CHEBI:59776"/>
    </ligand>
</feature>
<feature type="binding site" evidence="1">
    <location>
        <position position="233"/>
    </location>
    <ligand>
        <name>D-glyceraldehyde 3-phosphate</name>
        <dbReference type="ChEBI" id="CHEBI:59776"/>
    </ligand>
</feature>
<feature type="binding site" evidence="1">
    <location>
        <position position="315"/>
    </location>
    <ligand>
        <name>NAD(+)</name>
        <dbReference type="ChEBI" id="CHEBI:57540"/>
    </ligand>
</feature>
<feature type="site" description="Activates thiol group during catalysis" evidence="1">
    <location>
        <position position="178"/>
    </location>
</feature>
<sequence length="338" mass="36261">MVVKVGINGFGRIGRIVFRNAIEHDDIQIVAVNDPFIEPKYAEYMLRYDSTHGNFKGTIAVEGSDLVVNGKKVKFYTERDPSAIPWSETGADYIVESTGVFTTTEKASAHLKGGAKKVIISAPSADAPMYVMGVNNESYDGSANVISNASCTTNCLAPLAKVIHDNFTIVEGLMTTVHSYTATQKTVDGPSSKDWRGGRTAAQNIIPSSTGAAKAVGKVIPDLNGKLTGMSMRVPTANVSVVDLTVRIEKGASYDEIKEVVKKASEGPLAGILAYTEDEVVSSDMNGNPASSIFDAKAGISLNKNFVKLVSWYDNEWGYSRRVLDLISYVAKVDASKA</sequence>
<keyword id="KW-0963">Cytoplasm</keyword>
<keyword id="KW-0324">Glycolysis</keyword>
<keyword id="KW-0520">NAD</keyword>
<keyword id="KW-0560">Oxidoreductase</keyword>
<organism>
    <name type="scientific">Sordaria macrospora</name>
    <dbReference type="NCBI Taxonomy" id="5147"/>
    <lineage>
        <taxon>Eukaryota</taxon>
        <taxon>Fungi</taxon>
        <taxon>Dikarya</taxon>
        <taxon>Ascomycota</taxon>
        <taxon>Pezizomycotina</taxon>
        <taxon>Sordariomycetes</taxon>
        <taxon>Sordariomycetidae</taxon>
        <taxon>Sordariales</taxon>
        <taxon>Sordariaceae</taxon>
        <taxon>Sordaria</taxon>
    </lineage>
</organism>
<accession>Q8WZN0</accession>
<name>G3P_SORMA</name>
<evidence type="ECO:0000250" key="1"/>
<evidence type="ECO:0000255" key="2">
    <source>
        <dbReference type="PROSITE-ProRule" id="PRU10009"/>
    </source>
</evidence>
<evidence type="ECO:0000305" key="3"/>